<gene>
    <name type="primary">A2</name>
</gene>
<name>VGA2_ALHV1</name>
<organismHost>
    <name type="scientific">Connochaetes taurinus</name>
    <name type="common">Blue wildebeest</name>
    <dbReference type="NCBI Taxonomy" id="9927"/>
</organismHost>
<organism>
    <name type="scientific">Alcelaphine herpesvirus 1 (strain C500)</name>
    <name type="common">AlHV-1</name>
    <name type="synonym">Malignant catarrhal fever virus</name>
    <dbReference type="NCBI Taxonomy" id="654901"/>
    <lineage>
        <taxon>Viruses</taxon>
        <taxon>Duplodnaviria</taxon>
        <taxon>Heunggongvirae</taxon>
        <taxon>Peploviricota</taxon>
        <taxon>Herviviricetes</taxon>
        <taxon>Herpesvirales</taxon>
        <taxon>Orthoherpesviridae</taxon>
        <taxon>Gammaherpesvirinae</taxon>
        <taxon>Macavirus</taxon>
        <taxon>Macavirus alcelaphinegamma1</taxon>
    </lineage>
</organism>
<proteinExistence type="predicted"/>
<sequence length="199" mass="23289">MSQNSNSENPSPRKKRYVKMCDLTEEQKERRRSINRRASKNFLKRRRIFEEQQEKGLINLKYENSRLRCQVEKRKDEIRILREWLNYHKCTTLQNYNTGPPEPRVKVENSLEMQCATAFLNLDQQYTTNNLNIPETVSGNNTTNGFAAATATLHTNCYEKTLANNTNNFEAKLNCEVLPSFTSALDDLLSIDWNNLYNL</sequence>
<protein>
    <recommendedName>
        <fullName>Uncharacterized protein A2</fullName>
    </recommendedName>
</protein>
<feature type="chain" id="PRO_0000405724" description="Uncharacterized protein A2">
    <location>
        <begin position="1"/>
        <end position="199"/>
    </location>
</feature>
<reference key="1">
    <citation type="journal article" date="1997" name="J. Virol.">
        <title>Primary structure of the alcelaphine herpesvirus 1 genome.</title>
        <authorList>
            <person name="Ensser A."/>
            <person name="Pflanz R."/>
            <person name="Fleckenstein B."/>
        </authorList>
    </citation>
    <scope>NUCLEOTIDE SEQUENCE [LARGE SCALE GENOMIC DNA]</scope>
</reference>
<keyword id="KW-1185">Reference proteome</keyword>
<dbReference type="EMBL" id="AF005370">
    <property type="protein sequence ID" value="AAC58053.1"/>
    <property type="molecule type" value="Genomic_DNA"/>
</dbReference>
<dbReference type="PIR" id="T03101">
    <property type="entry name" value="T03101"/>
</dbReference>
<dbReference type="RefSeq" id="NP_065505.1">
    <property type="nucleotide sequence ID" value="NC_002531.1"/>
</dbReference>
<dbReference type="SMR" id="O42037"/>
<dbReference type="KEGG" id="vg:911789"/>
<dbReference type="Proteomes" id="UP000000941">
    <property type="component" value="Segment"/>
</dbReference>
<dbReference type="GO" id="GO:0003700">
    <property type="term" value="F:DNA-binding transcription factor activity"/>
    <property type="evidence" value="ECO:0007669"/>
    <property type="project" value="InterPro"/>
</dbReference>
<dbReference type="CDD" id="cd14686">
    <property type="entry name" value="bZIP"/>
    <property type="match status" value="1"/>
</dbReference>
<dbReference type="InterPro" id="IPR004827">
    <property type="entry name" value="bZIP"/>
</dbReference>
<dbReference type="Pfam" id="PF07716">
    <property type="entry name" value="bZIP_2"/>
    <property type="match status" value="1"/>
</dbReference>
<dbReference type="PROSITE" id="PS50217">
    <property type="entry name" value="BZIP"/>
    <property type="match status" value="1"/>
</dbReference>
<accession>O42037</accession>